<name>DAPF_ECO81</name>
<reference key="1">
    <citation type="journal article" date="2009" name="PLoS Genet.">
        <title>Organised genome dynamics in the Escherichia coli species results in highly diverse adaptive paths.</title>
        <authorList>
            <person name="Touchon M."/>
            <person name="Hoede C."/>
            <person name="Tenaillon O."/>
            <person name="Barbe V."/>
            <person name="Baeriswyl S."/>
            <person name="Bidet P."/>
            <person name="Bingen E."/>
            <person name="Bonacorsi S."/>
            <person name="Bouchier C."/>
            <person name="Bouvet O."/>
            <person name="Calteau A."/>
            <person name="Chiapello H."/>
            <person name="Clermont O."/>
            <person name="Cruveiller S."/>
            <person name="Danchin A."/>
            <person name="Diard M."/>
            <person name="Dossat C."/>
            <person name="Karoui M.E."/>
            <person name="Frapy E."/>
            <person name="Garry L."/>
            <person name="Ghigo J.M."/>
            <person name="Gilles A.M."/>
            <person name="Johnson J."/>
            <person name="Le Bouguenec C."/>
            <person name="Lescat M."/>
            <person name="Mangenot S."/>
            <person name="Martinez-Jehanne V."/>
            <person name="Matic I."/>
            <person name="Nassif X."/>
            <person name="Oztas S."/>
            <person name="Petit M.A."/>
            <person name="Pichon C."/>
            <person name="Rouy Z."/>
            <person name="Ruf C.S."/>
            <person name="Schneider D."/>
            <person name="Tourret J."/>
            <person name="Vacherie B."/>
            <person name="Vallenet D."/>
            <person name="Medigue C."/>
            <person name="Rocha E.P.C."/>
            <person name="Denamur E."/>
        </authorList>
    </citation>
    <scope>NUCLEOTIDE SEQUENCE [LARGE SCALE GENOMIC DNA]</scope>
    <source>
        <strain>ED1a</strain>
    </source>
</reference>
<proteinExistence type="inferred from homology"/>
<sequence length="274" mass="30267">MQFSKMHGLGNDFMVVDAVTQNVFFSPELIRRLADRHLGVGFDQLLVVEPPYDPELDFHYRIFNTDGSEVAQCGNGARCFARFVRLKGLTNKRDIRVSTANGRMVLTVTDDDLVRVNMGEPNFEPSAVPFRANKVEKTYIMRAAEQTILCGVVSMGNPHCVIQVDDVDTAAVETLGPVLESHERFPERANIGFMQVVKREHIRLRVYERGAGETQACGSGACAAVAVGIQQGLLAEEVRVELPGGRLDIAWKGPGHPLYMTGPAVHVYDGFIHL</sequence>
<comment type="function">
    <text evidence="1">Catalyzes the stereoinversion of LL-2,6-diaminopimelate (L,L-DAP) to meso-diaminopimelate (meso-DAP), a precursor of L-lysine and an essential component of the bacterial peptidoglycan.</text>
</comment>
<comment type="catalytic activity">
    <reaction evidence="1">
        <text>(2S,6S)-2,6-diaminopimelate = meso-2,6-diaminopimelate</text>
        <dbReference type="Rhea" id="RHEA:15393"/>
        <dbReference type="ChEBI" id="CHEBI:57609"/>
        <dbReference type="ChEBI" id="CHEBI:57791"/>
        <dbReference type="EC" id="5.1.1.7"/>
    </reaction>
</comment>
<comment type="pathway">
    <text evidence="1">Amino-acid biosynthesis; L-lysine biosynthesis via DAP pathway; DL-2,6-diaminopimelate from LL-2,6-diaminopimelate: step 1/1.</text>
</comment>
<comment type="subunit">
    <text evidence="1">Homodimer.</text>
</comment>
<comment type="subcellular location">
    <subcellularLocation>
        <location evidence="1">Cytoplasm</location>
    </subcellularLocation>
</comment>
<comment type="similarity">
    <text evidence="1">Belongs to the diaminopimelate epimerase family.</text>
</comment>
<evidence type="ECO:0000255" key="1">
    <source>
        <dbReference type="HAMAP-Rule" id="MF_00197"/>
    </source>
</evidence>
<gene>
    <name evidence="1" type="primary">dapF</name>
    <name type="ordered locus">ECED1_4494</name>
</gene>
<accession>B7MR29</accession>
<keyword id="KW-0028">Amino-acid biosynthesis</keyword>
<keyword id="KW-0963">Cytoplasm</keyword>
<keyword id="KW-0413">Isomerase</keyword>
<keyword id="KW-0457">Lysine biosynthesis</keyword>
<organism>
    <name type="scientific">Escherichia coli O81 (strain ED1a)</name>
    <dbReference type="NCBI Taxonomy" id="585397"/>
    <lineage>
        <taxon>Bacteria</taxon>
        <taxon>Pseudomonadati</taxon>
        <taxon>Pseudomonadota</taxon>
        <taxon>Gammaproteobacteria</taxon>
        <taxon>Enterobacterales</taxon>
        <taxon>Enterobacteriaceae</taxon>
        <taxon>Escherichia</taxon>
    </lineage>
</organism>
<dbReference type="EC" id="5.1.1.7" evidence="1"/>
<dbReference type="EMBL" id="CU928162">
    <property type="protein sequence ID" value="CAR10613.2"/>
    <property type="molecule type" value="Genomic_DNA"/>
</dbReference>
<dbReference type="RefSeq" id="WP_001160660.1">
    <property type="nucleotide sequence ID" value="NC_011745.1"/>
</dbReference>
<dbReference type="SMR" id="B7MR29"/>
<dbReference type="KEGG" id="ecq:ECED1_4494"/>
<dbReference type="HOGENOM" id="CLU_053306_1_1_6"/>
<dbReference type="UniPathway" id="UPA00034">
    <property type="reaction ID" value="UER00025"/>
</dbReference>
<dbReference type="Proteomes" id="UP000000748">
    <property type="component" value="Chromosome"/>
</dbReference>
<dbReference type="GO" id="GO:0005829">
    <property type="term" value="C:cytosol"/>
    <property type="evidence" value="ECO:0007669"/>
    <property type="project" value="TreeGrafter"/>
</dbReference>
<dbReference type="GO" id="GO:0008837">
    <property type="term" value="F:diaminopimelate epimerase activity"/>
    <property type="evidence" value="ECO:0007669"/>
    <property type="project" value="UniProtKB-UniRule"/>
</dbReference>
<dbReference type="GO" id="GO:0009089">
    <property type="term" value="P:lysine biosynthetic process via diaminopimelate"/>
    <property type="evidence" value="ECO:0007669"/>
    <property type="project" value="UniProtKB-UniRule"/>
</dbReference>
<dbReference type="FunFam" id="3.10.310.10:FF:000001">
    <property type="entry name" value="Diaminopimelate epimerase"/>
    <property type="match status" value="1"/>
</dbReference>
<dbReference type="FunFam" id="3.10.310.10:FF:000002">
    <property type="entry name" value="Diaminopimelate epimerase"/>
    <property type="match status" value="1"/>
</dbReference>
<dbReference type="Gene3D" id="3.10.310.10">
    <property type="entry name" value="Diaminopimelate Epimerase, Chain A, domain 1"/>
    <property type="match status" value="2"/>
</dbReference>
<dbReference type="HAMAP" id="MF_00197">
    <property type="entry name" value="DAP_epimerase"/>
    <property type="match status" value="1"/>
</dbReference>
<dbReference type="InterPro" id="IPR018510">
    <property type="entry name" value="DAP_epimerase_AS"/>
</dbReference>
<dbReference type="InterPro" id="IPR001653">
    <property type="entry name" value="DAP_epimerase_DapF"/>
</dbReference>
<dbReference type="NCBIfam" id="TIGR00652">
    <property type="entry name" value="DapF"/>
    <property type="match status" value="1"/>
</dbReference>
<dbReference type="PANTHER" id="PTHR31689:SF0">
    <property type="entry name" value="DIAMINOPIMELATE EPIMERASE"/>
    <property type="match status" value="1"/>
</dbReference>
<dbReference type="PANTHER" id="PTHR31689">
    <property type="entry name" value="DIAMINOPIMELATE EPIMERASE, CHLOROPLASTIC"/>
    <property type="match status" value="1"/>
</dbReference>
<dbReference type="Pfam" id="PF01678">
    <property type="entry name" value="DAP_epimerase"/>
    <property type="match status" value="2"/>
</dbReference>
<dbReference type="SUPFAM" id="SSF54506">
    <property type="entry name" value="Diaminopimelate epimerase-like"/>
    <property type="match status" value="1"/>
</dbReference>
<dbReference type="PROSITE" id="PS01326">
    <property type="entry name" value="DAP_EPIMERASE"/>
    <property type="match status" value="1"/>
</dbReference>
<feature type="chain" id="PRO_1000124415" description="Diaminopimelate epimerase">
    <location>
        <begin position="1"/>
        <end position="274"/>
    </location>
</feature>
<feature type="active site" description="Proton donor" evidence="1">
    <location>
        <position position="73"/>
    </location>
</feature>
<feature type="active site" description="Proton acceptor" evidence="1">
    <location>
        <position position="217"/>
    </location>
</feature>
<feature type="binding site" evidence="1">
    <location>
        <position position="11"/>
    </location>
    <ligand>
        <name>substrate</name>
    </ligand>
</feature>
<feature type="binding site" evidence="1">
    <location>
        <position position="44"/>
    </location>
    <ligand>
        <name>substrate</name>
    </ligand>
</feature>
<feature type="binding site" evidence="1">
    <location>
        <position position="64"/>
    </location>
    <ligand>
        <name>substrate</name>
    </ligand>
</feature>
<feature type="binding site" evidence="1">
    <location>
        <begin position="74"/>
        <end position="75"/>
    </location>
    <ligand>
        <name>substrate</name>
    </ligand>
</feature>
<feature type="binding site" evidence="1">
    <location>
        <position position="157"/>
    </location>
    <ligand>
        <name>substrate</name>
    </ligand>
</feature>
<feature type="binding site" evidence="1">
    <location>
        <position position="190"/>
    </location>
    <ligand>
        <name>substrate</name>
    </ligand>
</feature>
<feature type="binding site" evidence="1">
    <location>
        <begin position="208"/>
        <end position="209"/>
    </location>
    <ligand>
        <name>substrate</name>
    </ligand>
</feature>
<feature type="binding site" evidence="1">
    <location>
        <begin position="218"/>
        <end position="219"/>
    </location>
    <ligand>
        <name>substrate</name>
    </ligand>
</feature>
<feature type="site" description="Could be important to modulate the pK values of the two catalytic cysteine residues" evidence="1">
    <location>
        <position position="159"/>
    </location>
</feature>
<feature type="site" description="Could be important to modulate the pK values of the two catalytic cysteine residues" evidence="1">
    <location>
        <position position="208"/>
    </location>
</feature>
<feature type="site" description="Important for dimerization" evidence="1">
    <location>
        <position position="268"/>
    </location>
</feature>
<protein>
    <recommendedName>
        <fullName evidence="1">Diaminopimelate epimerase</fullName>
        <shortName evidence="1">DAP epimerase</shortName>
        <ecNumber evidence="1">5.1.1.7</ecNumber>
    </recommendedName>
    <alternativeName>
        <fullName evidence="1">PLP-independent amino acid racemase</fullName>
    </alternativeName>
</protein>